<name>Y289_RICPR</name>
<sequence>MNNIFGFFKSSNNTQSASGGKQNQENIKSANPLKISQNWYEERSDKLIVQRNLLIILIILLTIFMVISTLVIAFVVKSKQFDPFVIQLNSNTGRAAVVEPISSSMLTVDESLTRYFIKKYITARETYNPVDFATIARTTVRLFSTSAVYYNYLGYIRNKDFDPTLKYKEDNTTFLVIKSWSKIADDKYIVRFSVNETSGSQLVYNKIAVVSYDYVPMQLTDSELDINPVGFQVNGYRVDDDNS</sequence>
<evidence type="ECO:0000255" key="1"/>
<evidence type="ECO:0000305" key="2"/>
<keyword id="KW-0472">Membrane</keyword>
<keyword id="KW-1185">Reference proteome</keyword>
<keyword id="KW-0812">Transmembrane</keyword>
<keyword id="KW-1133">Transmembrane helix</keyword>
<reference key="1">
    <citation type="journal article" date="1998" name="Nature">
        <title>The genome sequence of Rickettsia prowazekii and the origin of mitochondria.</title>
        <authorList>
            <person name="Andersson S.G.E."/>
            <person name="Zomorodipour A."/>
            <person name="Andersson J.O."/>
            <person name="Sicheritz-Ponten T."/>
            <person name="Alsmark U.C.M."/>
            <person name="Podowski R.M."/>
            <person name="Naeslund A.K."/>
            <person name="Eriksson A.-S."/>
            <person name="Winkler H.H."/>
            <person name="Kurland C.G."/>
        </authorList>
    </citation>
    <scope>NUCLEOTIDE SEQUENCE [LARGE SCALE GENOMIC DNA]</scope>
    <source>
        <strain>Madrid E</strain>
    </source>
</reference>
<feature type="chain" id="PRO_0000101348" description="Uncharacterized protein RP289">
    <location>
        <begin position="1"/>
        <end position="243"/>
    </location>
</feature>
<feature type="transmembrane region" description="Helical" evidence="1">
    <location>
        <begin position="55"/>
        <end position="75"/>
    </location>
</feature>
<protein>
    <recommendedName>
        <fullName>Uncharacterized protein RP289</fullName>
    </recommendedName>
</protein>
<dbReference type="EMBL" id="AJ235271">
    <property type="protein sequence ID" value="CAA14750.1"/>
    <property type="molecule type" value="Genomic_DNA"/>
</dbReference>
<dbReference type="PIR" id="D71684">
    <property type="entry name" value="D71684"/>
</dbReference>
<dbReference type="RefSeq" id="NP_220673.1">
    <property type="nucleotide sequence ID" value="NC_000963.1"/>
</dbReference>
<dbReference type="RefSeq" id="WP_004597368.1">
    <property type="nucleotide sequence ID" value="NC_000963.1"/>
</dbReference>
<dbReference type="SMR" id="Q9ZDN8"/>
<dbReference type="STRING" id="272947.gene:17555370"/>
<dbReference type="EnsemblBacteria" id="CAA14750">
    <property type="protein sequence ID" value="CAA14750"/>
    <property type="gene ID" value="CAA14750"/>
</dbReference>
<dbReference type="KEGG" id="rpr:RP289"/>
<dbReference type="PATRIC" id="fig|272947.5.peg.296"/>
<dbReference type="eggNOG" id="COG3736">
    <property type="taxonomic scope" value="Bacteria"/>
</dbReference>
<dbReference type="HOGENOM" id="CLU_068461_1_1_5"/>
<dbReference type="OrthoDB" id="7366154at2"/>
<dbReference type="Proteomes" id="UP000002480">
    <property type="component" value="Chromosome"/>
</dbReference>
<dbReference type="GO" id="GO:0016020">
    <property type="term" value="C:membrane"/>
    <property type="evidence" value="ECO:0007669"/>
    <property type="project" value="UniProtKB-SubCell"/>
</dbReference>
<dbReference type="GO" id="GO:0030255">
    <property type="term" value="P:protein secretion by the type IV secretion system"/>
    <property type="evidence" value="ECO:0007669"/>
    <property type="project" value="InterPro"/>
</dbReference>
<dbReference type="CDD" id="cd16424">
    <property type="entry name" value="VirB8"/>
    <property type="match status" value="1"/>
</dbReference>
<dbReference type="Gene3D" id="3.10.450.230">
    <property type="entry name" value="VirB8 protein"/>
    <property type="match status" value="1"/>
</dbReference>
<dbReference type="InterPro" id="IPR032710">
    <property type="entry name" value="NTF2-like_dom_sf"/>
</dbReference>
<dbReference type="InterPro" id="IPR007430">
    <property type="entry name" value="VirB8"/>
</dbReference>
<dbReference type="InterPro" id="IPR026264">
    <property type="entry name" value="VirB8/PtlE"/>
</dbReference>
<dbReference type="Pfam" id="PF04335">
    <property type="entry name" value="VirB8"/>
    <property type="match status" value="1"/>
</dbReference>
<dbReference type="PIRSF" id="PIRSF003299">
    <property type="entry name" value="VirB8_PtlE"/>
    <property type="match status" value="1"/>
</dbReference>
<dbReference type="SUPFAM" id="SSF54427">
    <property type="entry name" value="NTF2-like"/>
    <property type="match status" value="1"/>
</dbReference>
<accession>Q9ZDN8</accession>
<organism>
    <name type="scientific">Rickettsia prowazekii (strain Madrid E)</name>
    <dbReference type="NCBI Taxonomy" id="272947"/>
    <lineage>
        <taxon>Bacteria</taxon>
        <taxon>Pseudomonadati</taxon>
        <taxon>Pseudomonadota</taxon>
        <taxon>Alphaproteobacteria</taxon>
        <taxon>Rickettsiales</taxon>
        <taxon>Rickettsiaceae</taxon>
        <taxon>Rickettsieae</taxon>
        <taxon>Rickettsia</taxon>
        <taxon>typhus group</taxon>
    </lineage>
</organism>
<gene>
    <name type="ordered locus">RP289</name>
</gene>
<comment type="subcellular location">
    <subcellularLocation>
        <location evidence="2">Membrane</location>
        <topology evidence="2">Single-pass membrane protein</topology>
    </subcellularLocation>
</comment>
<proteinExistence type="predicted"/>